<accession>Q32RI0</accession>
<organism>
    <name type="scientific">Zygnema circumcarinatum</name>
    <name type="common">Green alga</name>
    <dbReference type="NCBI Taxonomy" id="35869"/>
    <lineage>
        <taxon>Eukaryota</taxon>
        <taxon>Viridiplantae</taxon>
        <taxon>Streptophyta</taxon>
        <taxon>Zygnematophyceae</taxon>
        <taxon>Zygnematophycidae</taxon>
        <taxon>Zygnematales</taxon>
        <taxon>Zygnemataceae</taxon>
        <taxon>Zygnema</taxon>
    </lineage>
</organism>
<dbReference type="EC" id="7.1.2.2" evidence="1"/>
<dbReference type="EMBL" id="AY958086">
    <property type="protein sequence ID" value="AAX45796.1"/>
    <property type="molecule type" value="Genomic_DNA"/>
</dbReference>
<dbReference type="RefSeq" id="YP_636546.1">
    <property type="nucleotide sequence ID" value="NC_008117.1"/>
</dbReference>
<dbReference type="SMR" id="Q32RI0"/>
<dbReference type="GeneID" id="4108256"/>
<dbReference type="GO" id="GO:0009535">
    <property type="term" value="C:chloroplast thylakoid membrane"/>
    <property type="evidence" value="ECO:0007669"/>
    <property type="project" value="UniProtKB-SubCell"/>
</dbReference>
<dbReference type="GO" id="GO:0005739">
    <property type="term" value="C:mitochondrion"/>
    <property type="evidence" value="ECO:0007669"/>
    <property type="project" value="GOC"/>
</dbReference>
<dbReference type="GO" id="GO:0045259">
    <property type="term" value="C:proton-transporting ATP synthase complex"/>
    <property type="evidence" value="ECO:0007669"/>
    <property type="project" value="UniProtKB-KW"/>
</dbReference>
<dbReference type="GO" id="GO:0005524">
    <property type="term" value="F:ATP binding"/>
    <property type="evidence" value="ECO:0007669"/>
    <property type="project" value="UniProtKB-UniRule"/>
</dbReference>
<dbReference type="GO" id="GO:0016887">
    <property type="term" value="F:ATP hydrolysis activity"/>
    <property type="evidence" value="ECO:0007669"/>
    <property type="project" value="InterPro"/>
</dbReference>
<dbReference type="GO" id="GO:0046933">
    <property type="term" value="F:proton-transporting ATP synthase activity, rotational mechanism"/>
    <property type="evidence" value="ECO:0007669"/>
    <property type="project" value="UniProtKB-UniRule"/>
</dbReference>
<dbReference type="GO" id="GO:0042776">
    <property type="term" value="P:proton motive force-driven mitochondrial ATP synthesis"/>
    <property type="evidence" value="ECO:0007669"/>
    <property type="project" value="TreeGrafter"/>
</dbReference>
<dbReference type="CDD" id="cd18110">
    <property type="entry name" value="ATP-synt_F1_beta_C"/>
    <property type="match status" value="1"/>
</dbReference>
<dbReference type="CDD" id="cd18115">
    <property type="entry name" value="ATP-synt_F1_beta_N"/>
    <property type="match status" value="1"/>
</dbReference>
<dbReference type="CDD" id="cd01133">
    <property type="entry name" value="F1-ATPase_beta_CD"/>
    <property type="match status" value="1"/>
</dbReference>
<dbReference type="FunFam" id="1.10.1140.10:FF:000001">
    <property type="entry name" value="ATP synthase subunit beta"/>
    <property type="match status" value="1"/>
</dbReference>
<dbReference type="FunFam" id="3.40.50.300:FF:000004">
    <property type="entry name" value="ATP synthase subunit beta"/>
    <property type="match status" value="1"/>
</dbReference>
<dbReference type="FunFam" id="2.40.10.170:FF:000002">
    <property type="entry name" value="ATP synthase subunit beta, chloroplastic"/>
    <property type="match status" value="1"/>
</dbReference>
<dbReference type="Gene3D" id="2.40.10.170">
    <property type="match status" value="1"/>
</dbReference>
<dbReference type="Gene3D" id="1.10.1140.10">
    <property type="entry name" value="Bovine Mitochondrial F1-atpase, Atp Synthase Beta Chain, Chain D, domain 3"/>
    <property type="match status" value="1"/>
</dbReference>
<dbReference type="Gene3D" id="3.40.50.300">
    <property type="entry name" value="P-loop containing nucleotide triphosphate hydrolases"/>
    <property type="match status" value="1"/>
</dbReference>
<dbReference type="HAMAP" id="MF_01347">
    <property type="entry name" value="ATP_synth_beta_bact"/>
    <property type="match status" value="1"/>
</dbReference>
<dbReference type="InterPro" id="IPR003593">
    <property type="entry name" value="AAA+_ATPase"/>
</dbReference>
<dbReference type="InterPro" id="IPR055190">
    <property type="entry name" value="ATP-synt_VA_C"/>
</dbReference>
<dbReference type="InterPro" id="IPR005722">
    <property type="entry name" value="ATP_synth_F1_bsu"/>
</dbReference>
<dbReference type="InterPro" id="IPR020003">
    <property type="entry name" value="ATPase_a/bsu_AS"/>
</dbReference>
<dbReference type="InterPro" id="IPR050053">
    <property type="entry name" value="ATPase_alpha/beta_chains"/>
</dbReference>
<dbReference type="InterPro" id="IPR004100">
    <property type="entry name" value="ATPase_F1/V1/A1_a/bsu_N"/>
</dbReference>
<dbReference type="InterPro" id="IPR036121">
    <property type="entry name" value="ATPase_F1/V1/A1_a/bsu_N_sf"/>
</dbReference>
<dbReference type="InterPro" id="IPR000194">
    <property type="entry name" value="ATPase_F1/V1/A1_a/bsu_nucl-bd"/>
</dbReference>
<dbReference type="InterPro" id="IPR024034">
    <property type="entry name" value="ATPase_F1/V1_b/a_C"/>
</dbReference>
<dbReference type="InterPro" id="IPR027417">
    <property type="entry name" value="P-loop_NTPase"/>
</dbReference>
<dbReference type="NCBIfam" id="TIGR01039">
    <property type="entry name" value="atpD"/>
    <property type="match status" value="1"/>
</dbReference>
<dbReference type="PANTHER" id="PTHR15184">
    <property type="entry name" value="ATP SYNTHASE"/>
    <property type="match status" value="1"/>
</dbReference>
<dbReference type="PANTHER" id="PTHR15184:SF71">
    <property type="entry name" value="ATP SYNTHASE SUBUNIT BETA, MITOCHONDRIAL"/>
    <property type="match status" value="1"/>
</dbReference>
<dbReference type="Pfam" id="PF00006">
    <property type="entry name" value="ATP-synt_ab"/>
    <property type="match status" value="1"/>
</dbReference>
<dbReference type="Pfam" id="PF02874">
    <property type="entry name" value="ATP-synt_ab_N"/>
    <property type="match status" value="1"/>
</dbReference>
<dbReference type="Pfam" id="PF22919">
    <property type="entry name" value="ATP-synt_VA_C"/>
    <property type="match status" value="1"/>
</dbReference>
<dbReference type="SMART" id="SM00382">
    <property type="entry name" value="AAA"/>
    <property type="match status" value="1"/>
</dbReference>
<dbReference type="SUPFAM" id="SSF47917">
    <property type="entry name" value="C-terminal domain of alpha and beta subunits of F1 ATP synthase"/>
    <property type="match status" value="1"/>
</dbReference>
<dbReference type="SUPFAM" id="SSF50615">
    <property type="entry name" value="N-terminal domain of alpha and beta subunits of F1 ATP synthase"/>
    <property type="match status" value="1"/>
</dbReference>
<dbReference type="SUPFAM" id="SSF52540">
    <property type="entry name" value="P-loop containing nucleoside triphosphate hydrolases"/>
    <property type="match status" value="1"/>
</dbReference>
<dbReference type="PROSITE" id="PS00152">
    <property type="entry name" value="ATPASE_ALPHA_BETA"/>
    <property type="match status" value="1"/>
</dbReference>
<geneLocation type="chloroplast"/>
<comment type="function">
    <text evidence="1">Produces ATP from ADP in the presence of a proton gradient across the membrane. The catalytic sites are hosted primarily by the beta subunits.</text>
</comment>
<comment type="catalytic activity">
    <reaction evidence="1">
        <text>ATP + H2O + 4 H(+)(in) = ADP + phosphate + 5 H(+)(out)</text>
        <dbReference type="Rhea" id="RHEA:57720"/>
        <dbReference type="ChEBI" id="CHEBI:15377"/>
        <dbReference type="ChEBI" id="CHEBI:15378"/>
        <dbReference type="ChEBI" id="CHEBI:30616"/>
        <dbReference type="ChEBI" id="CHEBI:43474"/>
        <dbReference type="ChEBI" id="CHEBI:456216"/>
        <dbReference type="EC" id="7.1.2.2"/>
    </reaction>
</comment>
<comment type="subunit">
    <text evidence="1">F-type ATPases have 2 components, CF(1) - the catalytic core - and CF(0) - the membrane proton channel. CF(1) has five subunits: alpha(3), beta(3), gamma(1), delta(1), epsilon(1). CF(0) has four main subunits: a(1), b(1), b'(1) and c(9-12).</text>
</comment>
<comment type="subcellular location">
    <subcellularLocation>
        <location evidence="1">Plastid</location>
        <location evidence="1">Chloroplast thylakoid membrane</location>
        <topology evidence="1">Peripheral membrane protein</topology>
    </subcellularLocation>
</comment>
<comment type="similarity">
    <text evidence="1">Belongs to the ATPase alpha/beta chains family.</text>
</comment>
<evidence type="ECO:0000255" key="1">
    <source>
        <dbReference type="HAMAP-Rule" id="MF_01347"/>
    </source>
</evidence>
<protein>
    <recommendedName>
        <fullName evidence="1">ATP synthase subunit beta, chloroplastic</fullName>
        <ecNumber evidence="1">7.1.2.2</ecNumber>
    </recommendedName>
    <alternativeName>
        <fullName evidence="1">ATP synthase F1 sector subunit beta</fullName>
    </alternativeName>
    <alternativeName>
        <fullName evidence="1">F-ATPase subunit beta</fullName>
    </alternativeName>
</protein>
<sequence>MNNTHITLVASTVATKNVGRITQIIGPVLDASFPPGKMPNIYNALIIKGQNPAGQEINITCEVQQLLGDNKVRAVAMSATDGLMRGMEVTDTGAPLSVPVGESTLGRIFNVLGEPIDNLGPVDAATTLPIHRSAPAFTQLDTKLSIFETGIKVVDLLAPYRRGGKIGLFGGAGVGKTVLIMELINNIAKAHGGVSVFGGVGERTREGNDLYMEMKESKVINEENISESKVALVYGQMNEPPGARMRVGLTALTMAEYFRDINKQDVLLFIDNIFRFVQAGSEVSALLGRMPSAVGYQPTLSTEMGSLQERITSTKEGSITSIQAVYVPADDLTDPAPATTFAHLDATTVLSRGLAAKGIYPAVDPLDSTSTMLQPWIVGTEHYDTAQGVKQTLQRYKELQDIIAILGLDELSEEDRLVVARARKVERFLSQPFFVAEVFTGSPGKYVSLAETIKGFQMILAGELDHLPEQAFYLVGNINEATAKAATLS</sequence>
<gene>
    <name evidence="1" type="primary">atpB</name>
</gene>
<keyword id="KW-0066">ATP synthesis</keyword>
<keyword id="KW-0067">ATP-binding</keyword>
<keyword id="KW-0139">CF(1)</keyword>
<keyword id="KW-0150">Chloroplast</keyword>
<keyword id="KW-0375">Hydrogen ion transport</keyword>
<keyword id="KW-0406">Ion transport</keyword>
<keyword id="KW-0472">Membrane</keyword>
<keyword id="KW-0547">Nucleotide-binding</keyword>
<keyword id="KW-0934">Plastid</keyword>
<keyword id="KW-0793">Thylakoid</keyword>
<keyword id="KW-1278">Translocase</keyword>
<keyword id="KW-0813">Transport</keyword>
<reference key="1">
    <citation type="journal article" date="2005" name="BMC Biol.">
        <title>The complete chloroplast DNA sequences of the charophycean green algae Staurastrum and Zygnema reveal that the chloroplast genome underwent extensive changes during the evolution of the Zygnematales.</title>
        <authorList>
            <person name="Turmel M."/>
            <person name="Otis C."/>
            <person name="Lemieux C."/>
        </authorList>
    </citation>
    <scope>NUCLEOTIDE SEQUENCE [LARGE SCALE GENOMIC DNA]</scope>
</reference>
<feature type="chain" id="PRO_0000254533" description="ATP synthase subunit beta, chloroplastic">
    <location>
        <begin position="1"/>
        <end position="489"/>
    </location>
</feature>
<feature type="binding site" evidence="1">
    <location>
        <begin position="170"/>
        <end position="177"/>
    </location>
    <ligand>
        <name>ATP</name>
        <dbReference type="ChEBI" id="CHEBI:30616"/>
    </ligand>
</feature>
<proteinExistence type="inferred from homology"/>
<name>ATPB_ZYGCR</name>